<evidence type="ECO:0000250" key="1">
    <source>
        <dbReference type="UniProtKB" id="B4XC07"/>
    </source>
</evidence>
<evidence type="ECO:0000250" key="2">
    <source>
        <dbReference type="UniProtKB" id="Q99036"/>
    </source>
</evidence>
<evidence type="ECO:0000255" key="3"/>
<evidence type="ECO:0000256" key="4">
    <source>
        <dbReference type="SAM" id="MobiDB-lite"/>
    </source>
</evidence>
<evidence type="ECO:0000269" key="5">
    <source>
    </source>
</evidence>
<evidence type="ECO:0000305" key="6"/>
<gene>
    <name type="primary">MAN3</name>
    <name type="ordered locus">Os03g0828300</name>
    <name type="ordered locus">LOC_Os03g61270</name>
    <name type="ORF">OSJNBa0010E04.20</name>
</gene>
<name>MAN3_ORYSJ</name>
<sequence length="468" mass="51217">MTVRPRPAAAAIIIAAVFGAAAAAAGGGMVGVDGTQFVVEGGRTIYFSGFNAYWLMMMASDPARRAAVVAAFAQASSRGLNLARTWAFSDGGDQPLQSSPGVYDEAMFQGLDFVIAEARRHGIYLLLCLTNNFDDFGGKRQYVRWAADAGHNLTAGDDFFTSSVVKSYYKNHVKAVLTRVNTVTGVAYKDDPTIFAWELMNEPRCDADPTGGMVQAWVEEMAPYVKRVDGGRHLVTAGLEGFYGDGEHESKELNPWGIYYGTNYVATHRAAGVDFATIHLYPDVWLWGSTADEQAAFFRNWTRSHVHDTAAFLGKPLLVTEYGKFLWKGGGANKTQRNYFLDVVLDAIYASASRGGPLVGGAFWQLLLDDDVVAGMDDLRDGYEIILAEDSRAASIIGEHSEQLASLNGQDAEALRRRRRRPASSHRKTRLGSGGDSDALRLPRTLLIRFISLSRSISSFIQDNFVLF</sequence>
<accession>Q0DM48</accession>
<accession>Q10B69</accession>
<accession>Q8SAY1</accession>
<reference key="1">
    <citation type="journal article" date="2005" name="Genome Res.">
        <title>Sequence, annotation, and analysis of synteny between rice chromosome 3 and diverged grass species.</title>
        <authorList>
            <consortium name="The rice chromosome 3 sequencing consortium"/>
            <person name="Buell C.R."/>
            <person name="Yuan Q."/>
            <person name="Ouyang S."/>
            <person name="Liu J."/>
            <person name="Zhu W."/>
            <person name="Wang A."/>
            <person name="Maiti R."/>
            <person name="Haas B."/>
            <person name="Wortman J."/>
            <person name="Pertea M."/>
            <person name="Jones K.M."/>
            <person name="Kim M."/>
            <person name="Overton L."/>
            <person name="Tsitrin T."/>
            <person name="Fadrosh D."/>
            <person name="Bera J."/>
            <person name="Weaver B."/>
            <person name="Jin S."/>
            <person name="Johri S."/>
            <person name="Reardon M."/>
            <person name="Webb K."/>
            <person name="Hill J."/>
            <person name="Moffat K."/>
            <person name="Tallon L."/>
            <person name="Van Aken S."/>
            <person name="Lewis M."/>
            <person name="Utterback T."/>
            <person name="Feldblyum T."/>
            <person name="Zismann V."/>
            <person name="Iobst S."/>
            <person name="Hsiao J."/>
            <person name="de Vazeille A.R."/>
            <person name="Salzberg S.L."/>
            <person name="White O."/>
            <person name="Fraser C.M."/>
            <person name="Yu Y."/>
            <person name="Kim H."/>
            <person name="Rambo T."/>
            <person name="Currie J."/>
            <person name="Collura K."/>
            <person name="Kernodle-Thompson S."/>
            <person name="Wei F."/>
            <person name="Kudrna K."/>
            <person name="Ammiraju J.S.S."/>
            <person name="Luo M."/>
            <person name="Goicoechea J.L."/>
            <person name="Wing R.A."/>
            <person name="Henry D."/>
            <person name="Oates R."/>
            <person name="Palmer M."/>
            <person name="Pries G."/>
            <person name="Saski C."/>
            <person name="Simmons J."/>
            <person name="Soderlund C."/>
            <person name="Nelson W."/>
            <person name="de la Bastide M."/>
            <person name="Spiegel L."/>
            <person name="Nascimento L."/>
            <person name="Huang E."/>
            <person name="Preston R."/>
            <person name="Zutavern T."/>
            <person name="Palmer L."/>
            <person name="O'Shaughnessy A."/>
            <person name="Dike S."/>
            <person name="McCombie W.R."/>
            <person name="Minx P."/>
            <person name="Cordum H."/>
            <person name="Wilson R."/>
            <person name="Jin W."/>
            <person name="Lee H.R."/>
            <person name="Jiang J."/>
            <person name="Jackson S."/>
        </authorList>
    </citation>
    <scope>NUCLEOTIDE SEQUENCE [LARGE SCALE GENOMIC DNA]</scope>
    <source>
        <strain>cv. Nipponbare</strain>
    </source>
</reference>
<reference key="2">
    <citation type="journal article" date="2005" name="Nature">
        <title>The map-based sequence of the rice genome.</title>
        <authorList>
            <consortium name="International rice genome sequencing project (IRGSP)"/>
        </authorList>
    </citation>
    <scope>NUCLEOTIDE SEQUENCE [LARGE SCALE GENOMIC DNA]</scope>
    <source>
        <strain>cv. Nipponbare</strain>
    </source>
</reference>
<reference key="3">
    <citation type="journal article" date="2008" name="Nucleic Acids Res.">
        <title>The rice annotation project database (RAP-DB): 2008 update.</title>
        <authorList>
            <consortium name="The rice annotation project (RAP)"/>
        </authorList>
    </citation>
    <scope>GENOME REANNOTATION</scope>
    <source>
        <strain>cv. Nipponbare</strain>
    </source>
</reference>
<reference key="4">
    <citation type="journal article" date="2013" name="Rice">
        <title>Improvement of the Oryza sativa Nipponbare reference genome using next generation sequence and optical map data.</title>
        <authorList>
            <person name="Kawahara Y."/>
            <person name="de la Bastide M."/>
            <person name="Hamilton J.P."/>
            <person name="Kanamori H."/>
            <person name="McCombie W.R."/>
            <person name="Ouyang S."/>
            <person name="Schwartz D.C."/>
            <person name="Tanaka T."/>
            <person name="Wu J."/>
            <person name="Zhou S."/>
            <person name="Childs K.L."/>
            <person name="Davidson R.M."/>
            <person name="Lin H."/>
            <person name="Quesada-Ocampo L."/>
            <person name="Vaillancourt B."/>
            <person name="Sakai H."/>
            <person name="Lee S.S."/>
            <person name="Kim J."/>
            <person name="Numa H."/>
            <person name="Itoh T."/>
            <person name="Buell C.R."/>
            <person name="Matsumoto T."/>
        </authorList>
    </citation>
    <scope>GENOME REANNOTATION</scope>
    <source>
        <strain>cv. Nipponbare</strain>
    </source>
</reference>
<reference key="5">
    <citation type="journal article" date="2007" name="Funct. Integr. Genomics">
        <title>The endo-beta-mannanase gene families in Arabidopsis, rice, and poplar.</title>
        <authorList>
            <person name="Yuan J.S."/>
            <person name="Yang X."/>
            <person name="Lai J."/>
            <person name="Lin H."/>
            <person name="Cheng Z.-M."/>
            <person name="Nonogaki H."/>
            <person name="Chen F."/>
        </authorList>
    </citation>
    <scope>GENE FAMILY</scope>
    <scope>TISSUE SPECIFICITY</scope>
</reference>
<feature type="signal peptide" evidence="3">
    <location>
        <begin position="1"/>
        <end position="23"/>
    </location>
</feature>
<feature type="chain" id="PRO_0000277484" description="Mannan endo-1,4-beta-mannosidase 3">
    <location>
        <begin position="24"/>
        <end position="468"/>
    </location>
</feature>
<feature type="region of interest" description="Disordered" evidence="4">
    <location>
        <begin position="415"/>
        <end position="436"/>
    </location>
</feature>
<feature type="compositionally biased region" description="Basic residues" evidence="4">
    <location>
        <begin position="416"/>
        <end position="430"/>
    </location>
</feature>
<feature type="active site" description="Proton donor" evidence="2">
    <location>
        <position position="202"/>
    </location>
</feature>
<feature type="active site" description="Nucleophile" evidence="2">
    <location>
        <position position="321"/>
    </location>
</feature>
<feature type="binding site" evidence="1">
    <location>
        <position position="86"/>
    </location>
    <ligand>
        <name>substrate</name>
    </ligand>
</feature>
<feature type="binding site" evidence="1">
    <location>
        <position position="201"/>
    </location>
    <ligand>
        <name>substrate</name>
    </ligand>
</feature>
<feature type="binding site" evidence="1">
    <location>
        <position position="281"/>
    </location>
    <ligand>
        <name>substrate</name>
    </ligand>
</feature>
<feature type="binding site" evidence="1">
    <location>
        <position position="364"/>
    </location>
    <ligand>
        <name>substrate</name>
    </ligand>
</feature>
<feature type="binding site" evidence="1">
    <location>
        <position position="371"/>
    </location>
    <ligand>
        <name>substrate</name>
    </ligand>
</feature>
<feature type="glycosylation site" description="N-linked (GlcNAc...) asparagine" evidence="3">
    <location>
        <position position="152"/>
    </location>
</feature>
<feature type="glycosylation site" description="N-linked (GlcNAc...) asparagine" evidence="3">
    <location>
        <position position="300"/>
    </location>
</feature>
<feature type="glycosylation site" description="N-linked (GlcNAc...) asparagine" evidence="3">
    <location>
        <position position="333"/>
    </location>
</feature>
<comment type="catalytic activity">
    <reaction>
        <text>Random hydrolysis of (1-&gt;4)-beta-D-mannosidic linkages in mannans, galactomannans and glucomannans.</text>
        <dbReference type="EC" id="3.2.1.78"/>
    </reaction>
</comment>
<comment type="subcellular location">
    <subcellularLocation>
        <location evidence="6">Secreted</location>
    </subcellularLocation>
</comment>
<comment type="tissue specificity">
    <text evidence="5">Expressed in seeds.</text>
</comment>
<comment type="similarity">
    <text evidence="6">Belongs to the glycosyl hydrolase 5 (cellulase A) family.</text>
</comment>
<comment type="sequence caution" evidence="6">
    <conflict type="erroneous gene model prediction">
        <sequence resource="EMBL-CDS" id="ABF99675"/>
    </conflict>
</comment>
<comment type="sequence caution" evidence="6">
    <conflict type="erroneous gene model prediction">
        <sequence resource="EMBL-CDS" id="BAF13690"/>
    </conflict>
</comment>
<proteinExistence type="evidence at transcript level"/>
<dbReference type="EC" id="3.2.1.78"/>
<dbReference type="EMBL" id="AC096687">
    <property type="protein sequence ID" value="AAL79761.1"/>
    <property type="molecule type" value="Genomic_DNA"/>
</dbReference>
<dbReference type="EMBL" id="DP000009">
    <property type="protein sequence ID" value="ABF99675.1"/>
    <property type="status" value="ALT_SEQ"/>
    <property type="molecule type" value="Genomic_DNA"/>
</dbReference>
<dbReference type="EMBL" id="AP008209">
    <property type="protein sequence ID" value="BAF13690.1"/>
    <property type="status" value="ALT_SEQ"/>
    <property type="molecule type" value="Genomic_DNA"/>
</dbReference>
<dbReference type="EMBL" id="AP014959">
    <property type="status" value="NOT_ANNOTATED_CDS"/>
    <property type="molecule type" value="Genomic_DNA"/>
</dbReference>
<dbReference type="SMR" id="Q0DM48"/>
<dbReference type="FunCoup" id="Q0DM48">
    <property type="interactions" value="8"/>
</dbReference>
<dbReference type="STRING" id="39947.Q0DM48"/>
<dbReference type="CAZy" id="GH5">
    <property type="family name" value="Glycoside Hydrolase Family 5"/>
</dbReference>
<dbReference type="GlyCosmos" id="Q0DM48">
    <property type="glycosylation" value="3 sites, No reported glycans"/>
</dbReference>
<dbReference type="PaxDb" id="39947-Q0DM48"/>
<dbReference type="eggNOG" id="ENOG502QS4Q">
    <property type="taxonomic scope" value="Eukaryota"/>
</dbReference>
<dbReference type="InParanoid" id="Q0DM48"/>
<dbReference type="Proteomes" id="UP000000763">
    <property type="component" value="Chromosome 3"/>
</dbReference>
<dbReference type="Proteomes" id="UP000059680">
    <property type="component" value="Chromosome 3"/>
</dbReference>
<dbReference type="GO" id="GO:0005576">
    <property type="term" value="C:extracellular region"/>
    <property type="evidence" value="ECO:0007669"/>
    <property type="project" value="UniProtKB-SubCell"/>
</dbReference>
<dbReference type="GO" id="GO:0016985">
    <property type="term" value="F:mannan endo-1,4-beta-mannosidase activity"/>
    <property type="evidence" value="ECO:0000318"/>
    <property type="project" value="GO_Central"/>
</dbReference>
<dbReference type="GO" id="GO:0000272">
    <property type="term" value="P:polysaccharide catabolic process"/>
    <property type="evidence" value="ECO:0007669"/>
    <property type="project" value="InterPro"/>
</dbReference>
<dbReference type="FunFam" id="3.20.20.80:FF:000012">
    <property type="entry name" value="Mannan endo-1,4-beta-mannosidase 6"/>
    <property type="match status" value="1"/>
</dbReference>
<dbReference type="Gene3D" id="3.20.20.80">
    <property type="entry name" value="Glycosidases"/>
    <property type="match status" value="1"/>
</dbReference>
<dbReference type="InterPro" id="IPR001547">
    <property type="entry name" value="Glyco_hydro_5"/>
</dbReference>
<dbReference type="InterPro" id="IPR017853">
    <property type="entry name" value="Glycoside_hydrolase_SF"/>
</dbReference>
<dbReference type="InterPro" id="IPR045053">
    <property type="entry name" value="MAN-like"/>
</dbReference>
<dbReference type="PANTHER" id="PTHR31451">
    <property type="match status" value="1"/>
</dbReference>
<dbReference type="PANTHER" id="PTHR31451:SF36">
    <property type="entry name" value="MANNAN ENDO-1,4-BETA-MANNOSIDASE 4"/>
    <property type="match status" value="1"/>
</dbReference>
<dbReference type="Pfam" id="PF00150">
    <property type="entry name" value="Cellulase"/>
    <property type="match status" value="1"/>
</dbReference>
<dbReference type="SUPFAM" id="SSF51445">
    <property type="entry name" value="(Trans)glycosidases"/>
    <property type="match status" value="1"/>
</dbReference>
<keyword id="KW-0325">Glycoprotein</keyword>
<keyword id="KW-0326">Glycosidase</keyword>
<keyword id="KW-0378">Hydrolase</keyword>
<keyword id="KW-1185">Reference proteome</keyword>
<keyword id="KW-0964">Secreted</keyword>
<keyword id="KW-0732">Signal</keyword>
<organism>
    <name type="scientific">Oryza sativa subsp. japonica</name>
    <name type="common">Rice</name>
    <dbReference type="NCBI Taxonomy" id="39947"/>
    <lineage>
        <taxon>Eukaryota</taxon>
        <taxon>Viridiplantae</taxon>
        <taxon>Streptophyta</taxon>
        <taxon>Embryophyta</taxon>
        <taxon>Tracheophyta</taxon>
        <taxon>Spermatophyta</taxon>
        <taxon>Magnoliopsida</taxon>
        <taxon>Liliopsida</taxon>
        <taxon>Poales</taxon>
        <taxon>Poaceae</taxon>
        <taxon>BOP clade</taxon>
        <taxon>Oryzoideae</taxon>
        <taxon>Oryzeae</taxon>
        <taxon>Oryzinae</taxon>
        <taxon>Oryza</taxon>
        <taxon>Oryza sativa</taxon>
    </lineage>
</organism>
<protein>
    <recommendedName>
        <fullName>Mannan endo-1,4-beta-mannosidase 3</fullName>
        <ecNumber>3.2.1.78</ecNumber>
    </recommendedName>
    <alternativeName>
        <fullName>Beta-mannanase 3</fullName>
    </alternativeName>
    <alternativeName>
        <fullName>Endo-beta-1,4-mannanase 3</fullName>
    </alternativeName>
    <alternativeName>
        <fullName>OsMAN3</fullName>
    </alternativeName>
</protein>